<gene>
    <name type="primary">dis1</name>
    <name type="ORF">SPCC736.14</name>
</gene>
<keyword id="KW-0002">3D-structure</keyword>
<keyword id="KW-0963">Cytoplasm</keyword>
<keyword id="KW-0206">Cytoskeleton</keyword>
<keyword id="KW-0493">Microtubule</keyword>
<keyword id="KW-0597">Phosphoprotein</keyword>
<keyword id="KW-1185">Reference proteome</keyword>
<evidence type="ECO:0000256" key="1">
    <source>
        <dbReference type="SAM" id="MobiDB-lite"/>
    </source>
</evidence>
<evidence type="ECO:0000269" key="2">
    <source>
    </source>
</evidence>
<evidence type="ECO:0000269" key="3">
    <source>
    </source>
</evidence>
<name>DIS1_SCHPO</name>
<organism>
    <name type="scientific">Schizosaccharomyces pombe (strain 972 / ATCC 24843)</name>
    <name type="common">Fission yeast</name>
    <dbReference type="NCBI Taxonomy" id="284812"/>
    <lineage>
        <taxon>Eukaryota</taxon>
        <taxon>Fungi</taxon>
        <taxon>Dikarya</taxon>
        <taxon>Ascomycota</taxon>
        <taxon>Taphrinomycotina</taxon>
        <taxon>Schizosaccharomycetes</taxon>
        <taxon>Schizosaccharomycetales</taxon>
        <taxon>Schizosaccharomycetaceae</taxon>
        <taxon>Schizosaccharomyces</taxon>
    </lineage>
</organism>
<accession>Q09933</accession>
<sequence length="882" mass="97546">MELDDFNSRILSQIFDKSWKVRFEAYESLLHALNRALDDSDVCFQPWIHDPALWKQGLCDSNVPTQEHAVKSLRCFLDKSRQKGVNSAKSFVVAPLLEKCLPSPRQSIRDASHQALLILAKSDALDYVLEGLFSAARVKHPKQAVASIKELNSLLENFGIPALSPIPFYKLIPTLFAQSDKNIRQEASNLSITLYAWVGNAFKTHVFPQLKQIQVSDLEASFQNVTSRTTTGGHISNSLNTQEVVLPSFSSNAKPKPHLSSKSSSQGNTLQRSTSSFSTPNRKVSQPSDFSASPSRSIVSPAKNIVGSTPVDVLSKLTPEFHTALSSPKWKDRKEALESMVPVCSNPVYQEGDYSELLRVIAKSLKDANVVVVGVAALLLTHIAKALRKGFLPYTGIVLPSLFDRFKERKSSLVHSLLDAANAIFESCGLNDIMDETLEFLKHKNPQVKTETLRWLNRCLQLTDVCPPRASLETLCSLCVTLINDTFEPVRMATTNVLATLVQIFSQPVLSKYIVGLDPKKLPKILELSKDITVNAHPNQPSRPRLPRVASPLKTSPVKLAVTPQAPSPLPSSNPSQASLTEESLSTRSSPTKPSTTSLRSQSLVNRFASSTLKAPSSSSKGVSNAASSKQSFPSSPSISKKLETSRLSTKKLPGSTMKAASALKEYPQQQSMKSGGEKQDNLVTITMSEKVELDLLREEKAIRQVQEAEDALERERLFREINDLQIQNAEMKEQVYEKESTISQKEVEITSLRNEKDRLSTRLQQVLLELEKQHETNEEAMDIDLKVPESGAIGRVTTRATATTAMDESGNAGMVSSGIHSVSTKPSSYGTRRSLAGSMLQKPTQFSRPSFMFSPEARDNWRESHDLSSHLWEQIQRMKKA</sequence>
<dbReference type="EMBL" id="D55635">
    <property type="protein sequence ID" value="BAA09505.1"/>
    <property type="molecule type" value="Genomic_DNA"/>
</dbReference>
<dbReference type="EMBL" id="CU329672">
    <property type="protein sequence ID" value="CAA19278.1"/>
    <property type="molecule type" value="Genomic_DNA"/>
</dbReference>
<dbReference type="PIR" id="T43250">
    <property type="entry name" value="T43250"/>
</dbReference>
<dbReference type="RefSeq" id="NP_587785.1">
    <property type="nucleotide sequence ID" value="NM_001022778.2"/>
</dbReference>
<dbReference type="PDB" id="5M9E">
    <property type="method" value="X-ray"/>
    <property type="resolution" value="2.83 A"/>
    <property type="chains" value="E/F/G/H=833-852"/>
</dbReference>
<dbReference type="PDBsum" id="5M9E"/>
<dbReference type="SMR" id="Q09933"/>
<dbReference type="BioGRID" id="276068">
    <property type="interactions" value="31"/>
</dbReference>
<dbReference type="FunCoup" id="Q09933">
    <property type="interactions" value="3"/>
</dbReference>
<dbReference type="STRING" id="284812.Q09933"/>
<dbReference type="iPTMnet" id="Q09933"/>
<dbReference type="PaxDb" id="4896-SPCC736.14.1"/>
<dbReference type="EnsemblFungi" id="SPCC736.14.1">
    <property type="protein sequence ID" value="SPCC736.14.1:pep"/>
    <property type="gene ID" value="SPCC736.14"/>
</dbReference>
<dbReference type="GeneID" id="2539505"/>
<dbReference type="KEGG" id="spo:2539505"/>
<dbReference type="PomBase" id="SPCC736.14">
    <property type="gene designation" value="dis1"/>
</dbReference>
<dbReference type="VEuPathDB" id="FungiDB:SPCC736.14"/>
<dbReference type="eggNOG" id="KOG1820">
    <property type="taxonomic scope" value="Eukaryota"/>
</dbReference>
<dbReference type="HOGENOM" id="CLU_008401_1_0_1"/>
<dbReference type="InParanoid" id="Q09933"/>
<dbReference type="OMA" id="VKHPKQA"/>
<dbReference type="PhylomeDB" id="Q09933"/>
<dbReference type="CD-CODE" id="576F0A76">
    <property type="entry name" value="Centrosome"/>
</dbReference>
<dbReference type="PRO" id="PR:Q09933"/>
<dbReference type="Proteomes" id="UP000002485">
    <property type="component" value="Chromosome III"/>
</dbReference>
<dbReference type="GO" id="GO:0005737">
    <property type="term" value="C:cytoplasm"/>
    <property type="evidence" value="ECO:0007005"/>
    <property type="project" value="PomBase"/>
</dbReference>
<dbReference type="GO" id="GO:0005881">
    <property type="term" value="C:cytoplasmic microtubule"/>
    <property type="evidence" value="ECO:0000314"/>
    <property type="project" value="PomBase"/>
</dbReference>
<dbReference type="GO" id="GO:0000776">
    <property type="term" value="C:kinetochore"/>
    <property type="evidence" value="ECO:0000314"/>
    <property type="project" value="PomBase"/>
</dbReference>
<dbReference type="GO" id="GO:0035974">
    <property type="term" value="C:meiotic spindle pole body"/>
    <property type="evidence" value="ECO:0000269"/>
    <property type="project" value="PomBase"/>
</dbReference>
<dbReference type="GO" id="GO:0015630">
    <property type="term" value="C:microtubule cytoskeleton"/>
    <property type="evidence" value="ECO:0000314"/>
    <property type="project" value="PomBase"/>
</dbReference>
<dbReference type="GO" id="GO:0072686">
    <property type="term" value="C:mitotic spindle"/>
    <property type="evidence" value="ECO:0000314"/>
    <property type="project" value="PomBase"/>
</dbReference>
<dbReference type="GO" id="GO:1990537">
    <property type="term" value="C:mitotic spindle polar microtubule"/>
    <property type="evidence" value="ECO:0000314"/>
    <property type="project" value="PomBase"/>
</dbReference>
<dbReference type="GO" id="GO:0097431">
    <property type="term" value="C:mitotic spindle pole"/>
    <property type="evidence" value="ECO:0000314"/>
    <property type="project" value="PomBase"/>
</dbReference>
<dbReference type="GO" id="GO:0044732">
    <property type="term" value="C:mitotic spindle pole body"/>
    <property type="evidence" value="ECO:0000314"/>
    <property type="project" value="PomBase"/>
</dbReference>
<dbReference type="GO" id="GO:0005634">
    <property type="term" value="C:nucleus"/>
    <property type="evidence" value="ECO:0007005"/>
    <property type="project" value="PomBase"/>
</dbReference>
<dbReference type="GO" id="GO:0000922">
    <property type="term" value="C:spindle pole"/>
    <property type="evidence" value="ECO:0000318"/>
    <property type="project" value="GO_Central"/>
</dbReference>
<dbReference type="GO" id="GO:0005816">
    <property type="term" value="C:spindle pole body"/>
    <property type="evidence" value="ECO:0000318"/>
    <property type="project" value="GO_Central"/>
</dbReference>
<dbReference type="GO" id="GO:0099070">
    <property type="term" value="C:static microtubule bundle"/>
    <property type="evidence" value="ECO:0000314"/>
    <property type="project" value="PomBase"/>
</dbReference>
<dbReference type="GO" id="GO:0008017">
    <property type="term" value="F:microtubule binding"/>
    <property type="evidence" value="ECO:0000314"/>
    <property type="project" value="PomBase"/>
</dbReference>
<dbReference type="GO" id="GO:0170060">
    <property type="term" value="F:microtubule destabilizing activity"/>
    <property type="evidence" value="ECO:0000314"/>
    <property type="project" value="PomBase"/>
</dbReference>
<dbReference type="GO" id="GO:0061863">
    <property type="term" value="F:microtubule plus end polymerase"/>
    <property type="evidence" value="ECO:0000269"/>
    <property type="project" value="PomBase"/>
</dbReference>
<dbReference type="GO" id="GO:0051010">
    <property type="term" value="F:microtubule plus-end binding"/>
    <property type="evidence" value="ECO:0000269"/>
    <property type="project" value="PomBase"/>
</dbReference>
<dbReference type="GO" id="GO:0051315">
    <property type="term" value="P:attachment of mitotic spindle microtubules to kinetochore"/>
    <property type="evidence" value="ECO:0000315"/>
    <property type="project" value="PomBase"/>
</dbReference>
<dbReference type="GO" id="GO:0051305">
    <property type="term" value="P:chromosome movement towards spindle pole"/>
    <property type="evidence" value="ECO:0000269"/>
    <property type="project" value="PomBase"/>
</dbReference>
<dbReference type="GO" id="GO:0030951">
    <property type="term" value="P:establishment or maintenance of microtubule cytoskeleton polarity"/>
    <property type="evidence" value="ECO:0000318"/>
    <property type="project" value="GO_Central"/>
</dbReference>
<dbReference type="GO" id="GO:1990571">
    <property type="term" value="P:meiotic centromere clustering"/>
    <property type="evidence" value="ECO:0000315"/>
    <property type="project" value="PomBase"/>
</dbReference>
<dbReference type="GO" id="GO:0001578">
    <property type="term" value="P:microtubule bundle formation"/>
    <property type="evidence" value="ECO:0000315"/>
    <property type="project" value="PomBase"/>
</dbReference>
<dbReference type="GO" id="GO:0007019">
    <property type="term" value="P:microtubule depolymerization"/>
    <property type="evidence" value="ECO:0000315"/>
    <property type="project" value="PomBase"/>
</dbReference>
<dbReference type="GO" id="GO:0046785">
    <property type="term" value="P:microtubule polymerization"/>
    <property type="evidence" value="ECO:0000318"/>
    <property type="project" value="GO_Central"/>
</dbReference>
<dbReference type="GO" id="GO:0000022">
    <property type="term" value="P:mitotic spindle elongation"/>
    <property type="evidence" value="ECO:0000315"/>
    <property type="project" value="PomBase"/>
</dbReference>
<dbReference type="GO" id="GO:0007052">
    <property type="term" value="P:mitotic spindle organization"/>
    <property type="evidence" value="ECO:0000318"/>
    <property type="project" value="GO_Central"/>
</dbReference>
<dbReference type="FunFam" id="1.25.10.10:FF:000019">
    <property type="entry name" value="Cytoskeleton-associated protein 5"/>
    <property type="match status" value="1"/>
</dbReference>
<dbReference type="Gene3D" id="1.25.10.10">
    <property type="entry name" value="Leucine-rich Repeat Variant"/>
    <property type="match status" value="2"/>
</dbReference>
<dbReference type="InterPro" id="IPR011989">
    <property type="entry name" value="ARM-like"/>
</dbReference>
<dbReference type="InterPro" id="IPR016024">
    <property type="entry name" value="ARM-type_fold"/>
</dbReference>
<dbReference type="InterPro" id="IPR034085">
    <property type="entry name" value="TOG"/>
</dbReference>
<dbReference type="InterPro" id="IPR045110">
    <property type="entry name" value="XMAP215"/>
</dbReference>
<dbReference type="InterPro" id="IPR048491">
    <property type="entry name" value="XMAP215_CLASP_TOG"/>
</dbReference>
<dbReference type="PANTHER" id="PTHR12609">
    <property type="entry name" value="MICROTUBULE ASSOCIATED PROTEIN XMAP215"/>
    <property type="match status" value="1"/>
</dbReference>
<dbReference type="Pfam" id="PF21041">
    <property type="entry name" value="XMAP215_CLASP_TOG"/>
    <property type="match status" value="1"/>
</dbReference>
<dbReference type="SMART" id="SM01349">
    <property type="entry name" value="TOG"/>
    <property type="match status" value="2"/>
</dbReference>
<dbReference type="SUPFAM" id="SSF48371">
    <property type="entry name" value="ARM repeat"/>
    <property type="match status" value="1"/>
</dbReference>
<comment type="function">
    <text evidence="3">Has a role in sister chromatid separation.</text>
</comment>
<comment type="subcellular location">
    <subcellularLocation>
        <location evidence="3">Cytoplasm</location>
        <location evidence="3">Cytoskeleton</location>
        <location evidence="3">Microtubule organizing center</location>
        <location evidence="3">Spindle pole body</location>
    </subcellularLocation>
    <subcellularLocation>
        <location evidence="3">Cytoplasm</location>
        <location evidence="3">Cytoskeleton</location>
        <location evidence="3">Spindle</location>
    </subcellularLocation>
    <text>Spindle pole body during metaphase and spindle microtubules during anaphase.</text>
</comment>
<proteinExistence type="evidence at protein level"/>
<feature type="chain" id="PRO_0000079913" description="Phosphoprotein p93">
    <location>
        <begin position="1"/>
        <end position="882"/>
    </location>
</feature>
<feature type="region of interest" description="Disordered" evidence="1">
    <location>
        <begin position="250"/>
        <end position="297"/>
    </location>
</feature>
<feature type="region of interest" description="Disordered" evidence="1">
    <location>
        <begin position="562"/>
        <end position="678"/>
    </location>
</feature>
<feature type="region of interest" description="Disordered" evidence="1">
    <location>
        <begin position="809"/>
        <end position="833"/>
    </location>
</feature>
<feature type="compositionally biased region" description="Polar residues" evidence="1">
    <location>
        <begin position="266"/>
        <end position="297"/>
    </location>
</feature>
<feature type="compositionally biased region" description="Low complexity" evidence="1">
    <location>
        <begin position="579"/>
        <end position="601"/>
    </location>
</feature>
<feature type="compositionally biased region" description="Low complexity" evidence="1">
    <location>
        <begin position="609"/>
        <end position="640"/>
    </location>
</feature>
<feature type="compositionally biased region" description="Polar residues" evidence="1">
    <location>
        <begin position="819"/>
        <end position="832"/>
    </location>
</feature>
<feature type="modified residue" description="Phosphothreonine; by CDC2" evidence="3">
    <location>
        <position position="279"/>
    </location>
</feature>
<feature type="modified residue" description="Phosphoserine; by CDC2" evidence="2 3">
    <location>
        <position position="293"/>
    </location>
</feature>
<feature type="modified residue" description="Phosphoserine; by CDC2" evidence="3">
    <location>
        <position position="300"/>
    </location>
</feature>
<feature type="modified residue" description="Phosphoserine; by CDC2" evidence="2 3">
    <location>
        <position position="551"/>
    </location>
</feature>
<feature type="modified residue" description="Phosphoserine; by CDC2" evidence="2 3">
    <location>
        <position position="556"/>
    </location>
</feature>
<feature type="modified residue" description="Phosphoserine; by CDC2" evidence="3">
    <location>
        <position position="590"/>
    </location>
</feature>
<feature type="modified residue" description="Phosphoserine" evidence="2">
    <location>
        <position position="649"/>
    </location>
</feature>
<feature type="modified residue" description="Phosphothreonine" evidence="2">
    <location>
        <position position="650"/>
    </location>
</feature>
<reference key="1">
    <citation type="journal article" date="1995" name="Genes Dev.">
        <title>p93dis1, which is required for sister chromatid separation, is a novel microtubule and spindle pole body-associating protein phosphorylated at the Cdc2 target sites.</title>
        <authorList>
            <person name="Nabeshima K."/>
            <person name="Kurooka H."/>
            <person name="Takeuchi M."/>
            <person name="Kinoshita K."/>
            <person name="Nakaseo Y."/>
            <person name="Yanagida M."/>
        </authorList>
    </citation>
    <scope>NUCLEOTIDE SEQUENCE [GENOMIC DNA]</scope>
    <scope>FUNCTION</scope>
    <scope>SUBCELLULAR LOCATION</scope>
    <scope>PHOSPHORYLATION AT THR-279; SER-293; SER-300; SER-551; SER-556 AND SER-590</scope>
</reference>
<reference key="2">
    <citation type="journal article" date="2002" name="Nature">
        <title>The genome sequence of Schizosaccharomyces pombe.</title>
        <authorList>
            <person name="Wood V."/>
            <person name="Gwilliam R."/>
            <person name="Rajandream M.A."/>
            <person name="Lyne M.H."/>
            <person name="Lyne R."/>
            <person name="Stewart A."/>
            <person name="Sgouros J.G."/>
            <person name="Peat N."/>
            <person name="Hayles J."/>
            <person name="Baker S.G."/>
            <person name="Basham D."/>
            <person name="Bowman S."/>
            <person name="Brooks K."/>
            <person name="Brown D."/>
            <person name="Brown S."/>
            <person name="Chillingworth T."/>
            <person name="Churcher C.M."/>
            <person name="Collins M."/>
            <person name="Connor R."/>
            <person name="Cronin A."/>
            <person name="Davis P."/>
            <person name="Feltwell T."/>
            <person name="Fraser A."/>
            <person name="Gentles S."/>
            <person name="Goble A."/>
            <person name="Hamlin N."/>
            <person name="Harris D.E."/>
            <person name="Hidalgo J."/>
            <person name="Hodgson G."/>
            <person name="Holroyd S."/>
            <person name="Hornsby T."/>
            <person name="Howarth S."/>
            <person name="Huckle E.J."/>
            <person name="Hunt S."/>
            <person name="Jagels K."/>
            <person name="James K.D."/>
            <person name="Jones L."/>
            <person name="Jones M."/>
            <person name="Leather S."/>
            <person name="McDonald S."/>
            <person name="McLean J."/>
            <person name="Mooney P."/>
            <person name="Moule S."/>
            <person name="Mungall K.L."/>
            <person name="Murphy L.D."/>
            <person name="Niblett D."/>
            <person name="Odell C."/>
            <person name="Oliver K."/>
            <person name="O'Neil S."/>
            <person name="Pearson D."/>
            <person name="Quail M.A."/>
            <person name="Rabbinowitsch E."/>
            <person name="Rutherford K.M."/>
            <person name="Rutter S."/>
            <person name="Saunders D."/>
            <person name="Seeger K."/>
            <person name="Sharp S."/>
            <person name="Skelton J."/>
            <person name="Simmonds M.N."/>
            <person name="Squares R."/>
            <person name="Squares S."/>
            <person name="Stevens K."/>
            <person name="Taylor K."/>
            <person name="Taylor R.G."/>
            <person name="Tivey A."/>
            <person name="Walsh S.V."/>
            <person name="Warren T."/>
            <person name="Whitehead S."/>
            <person name="Woodward J.R."/>
            <person name="Volckaert G."/>
            <person name="Aert R."/>
            <person name="Robben J."/>
            <person name="Grymonprez B."/>
            <person name="Weltjens I."/>
            <person name="Vanstreels E."/>
            <person name="Rieger M."/>
            <person name="Schaefer M."/>
            <person name="Mueller-Auer S."/>
            <person name="Gabel C."/>
            <person name="Fuchs M."/>
            <person name="Duesterhoeft A."/>
            <person name="Fritzc C."/>
            <person name="Holzer E."/>
            <person name="Moestl D."/>
            <person name="Hilbert H."/>
            <person name="Borzym K."/>
            <person name="Langer I."/>
            <person name="Beck A."/>
            <person name="Lehrach H."/>
            <person name="Reinhardt R."/>
            <person name="Pohl T.M."/>
            <person name="Eger P."/>
            <person name="Zimmermann W."/>
            <person name="Wedler H."/>
            <person name="Wambutt R."/>
            <person name="Purnelle B."/>
            <person name="Goffeau A."/>
            <person name="Cadieu E."/>
            <person name="Dreano S."/>
            <person name="Gloux S."/>
            <person name="Lelaure V."/>
            <person name="Mottier S."/>
            <person name="Galibert F."/>
            <person name="Aves S.J."/>
            <person name="Xiang Z."/>
            <person name="Hunt C."/>
            <person name="Moore K."/>
            <person name="Hurst S.M."/>
            <person name="Lucas M."/>
            <person name="Rochet M."/>
            <person name="Gaillardin C."/>
            <person name="Tallada V.A."/>
            <person name="Garzon A."/>
            <person name="Thode G."/>
            <person name="Daga R.R."/>
            <person name="Cruzado L."/>
            <person name="Jimenez J."/>
            <person name="Sanchez M."/>
            <person name="del Rey F."/>
            <person name="Benito J."/>
            <person name="Dominguez A."/>
            <person name="Revuelta J.L."/>
            <person name="Moreno S."/>
            <person name="Armstrong J."/>
            <person name="Forsburg S.L."/>
            <person name="Cerutti L."/>
            <person name="Lowe T."/>
            <person name="McCombie W.R."/>
            <person name="Paulsen I."/>
            <person name="Potashkin J."/>
            <person name="Shpakovski G.V."/>
            <person name="Ussery D."/>
            <person name="Barrell B.G."/>
            <person name="Nurse P."/>
        </authorList>
    </citation>
    <scope>NUCLEOTIDE SEQUENCE [LARGE SCALE GENOMIC DNA]</scope>
    <source>
        <strain>972 / ATCC 24843</strain>
    </source>
</reference>
<reference key="3">
    <citation type="journal article" date="2008" name="J. Proteome Res.">
        <title>Phosphoproteome analysis of fission yeast.</title>
        <authorList>
            <person name="Wilson-Grady J.T."/>
            <person name="Villen J."/>
            <person name="Gygi S.P."/>
        </authorList>
    </citation>
    <scope>PHOSPHORYLATION [LARGE SCALE ANALYSIS] AT SER-293; SER-551; SER-556; SER-649 AND THR-650</scope>
    <scope>IDENTIFICATION BY MASS SPECTROMETRY</scope>
</reference>
<protein>
    <recommendedName>
        <fullName>Phosphoprotein p93</fullName>
    </recommendedName>
</protein>